<sequence length="396" mass="43911">MSGIKKVVLAYSGGLDTSVILKWLAVTYNCEVVTLTADLGQEEDLDGVDDKAMRTGASRAYVEDLQEEFARDFIFPMMRAGAVYEGRYLLGTSIARPLIAKRLVEIARAEGAQAVAHGATGKGNDQVRFELAVNALAPDLRVIAPWREWDLRSRTQLNAFAEEHGIPISSSAKQYSMDRNMLHCSFEGGELEDPWNEPGPNSYVMAVPMEQAPDEAEYISIDFEHGNPVAVNGERLSPAALVKKLNSIGGRHGIGRLDMVENRFVGIKSRGVYETPGGTLIHIAHRDLEGICIDRETMHLRDAMLPRYAAAIYNGFWFAPEREAMQAMIDVSQQRVTGTVRLKLYKGNAWPVGRQSPNTLYCHDLATFEDCATYDHKDAAGFIKLQGLRIRGYKKG</sequence>
<dbReference type="EC" id="6.3.4.5" evidence="1"/>
<dbReference type="EMBL" id="AE017285">
    <property type="protein sequence ID" value="AAS95575.1"/>
    <property type="molecule type" value="Genomic_DNA"/>
</dbReference>
<dbReference type="RefSeq" id="WP_010938394.1">
    <property type="nucleotide sequence ID" value="NC_002937.3"/>
</dbReference>
<dbReference type="RefSeq" id="YP_010316.1">
    <property type="nucleotide sequence ID" value="NC_002937.3"/>
</dbReference>
<dbReference type="SMR" id="P61522"/>
<dbReference type="IntAct" id="P61522">
    <property type="interactions" value="1"/>
</dbReference>
<dbReference type="STRING" id="882.DVU_1095"/>
<dbReference type="PaxDb" id="882-DVU_1095"/>
<dbReference type="EnsemblBacteria" id="AAS95575">
    <property type="protein sequence ID" value="AAS95575"/>
    <property type="gene ID" value="DVU_1095"/>
</dbReference>
<dbReference type="KEGG" id="dvu:DVU_1095"/>
<dbReference type="PATRIC" id="fig|882.5.peg.1033"/>
<dbReference type="eggNOG" id="COG0137">
    <property type="taxonomic scope" value="Bacteria"/>
</dbReference>
<dbReference type="HOGENOM" id="CLU_032784_4_2_7"/>
<dbReference type="OrthoDB" id="9801641at2"/>
<dbReference type="PhylomeDB" id="P61522"/>
<dbReference type="UniPathway" id="UPA00068">
    <property type="reaction ID" value="UER00113"/>
</dbReference>
<dbReference type="Proteomes" id="UP000002194">
    <property type="component" value="Chromosome"/>
</dbReference>
<dbReference type="GO" id="GO:0005737">
    <property type="term" value="C:cytoplasm"/>
    <property type="evidence" value="ECO:0007669"/>
    <property type="project" value="UniProtKB-SubCell"/>
</dbReference>
<dbReference type="GO" id="GO:0004055">
    <property type="term" value="F:argininosuccinate synthase activity"/>
    <property type="evidence" value="ECO:0007669"/>
    <property type="project" value="UniProtKB-UniRule"/>
</dbReference>
<dbReference type="GO" id="GO:0005524">
    <property type="term" value="F:ATP binding"/>
    <property type="evidence" value="ECO:0007669"/>
    <property type="project" value="UniProtKB-UniRule"/>
</dbReference>
<dbReference type="GO" id="GO:0000053">
    <property type="term" value="P:argininosuccinate metabolic process"/>
    <property type="evidence" value="ECO:0007669"/>
    <property type="project" value="TreeGrafter"/>
</dbReference>
<dbReference type="GO" id="GO:0006526">
    <property type="term" value="P:L-arginine biosynthetic process"/>
    <property type="evidence" value="ECO:0007669"/>
    <property type="project" value="UniProtKB-UniRule"/>
</dbReference>
<dbReference type="GO" id="GO:0000050">
    <property type="term" value="P:urea cycle"/>
    <property type="evidence" value="ECO:0007669"/>
    <property type="project" value="TreeGrafter"/>
</dbReference>
<dbReference type="CDD" id="cd01999">
    <property type="entry name" value="ASS"/>
    <property type="match status" value="1"/>
</dbReference>
<dbReference type="FunFam" id="3.40.50.620:FF:000019">
    <property type="entry name" value="Argininosuccinate synthase"/>
    <property type="match status" value="1"/>
</dbReference>
<dbReference type="FunFam" id="3.90.1260.10:FF:000007">
    <property type="entry name" value="Argininosuccinate synthase"/>
    <property type="match status" value="1"/>
</dbReference>
<dbReference type="Gene3D" id="3.90.1260.10">
    <property type="entry name" value="Argininosuccinate synthetase, chain A, domain 2"/>
    <property type="match status" value="1"/>
</dbReference>
<dbReference type="Gene3D" id="3.40.50.620">
    <property type="entry name" value="HUPs"/>
    <property type="match status" value="1"/>
</dbReference>
<dbReference type="Gene3D" id="1.20.5.470">
    <property type="entry name" value="Single helix bin"/>
    <property type="match status" value="1"/>
</dbReference>
<dbReference type="HAMAP" id="MF_00005">
    <property type="entry name" value="Arg_succ_synth_type1"/>
    <property type="match status" value="1"/>
</dbReference>
<dbReference type="InterPro" id="IPR048268">
    <property type="entry name" value="Arginosuc_syn_C"/>
</dbReference>
<dbReference type="InterPro" id="IPR048267">
    <property type="entry name" value="Arginosuc_syn_N"/>
</dbReference>
<dbReference type="InterPro" id="IPR001518">
    <property type="entry name" value="Arginosuc_synth"/>
</dbReference>
<dbReference type="InterPro" id="IPR018223">
    <property type="entry name" value="Arginosuc_synth_CS"/>
</dbReference>
<dbReference type="InterPro" id="IPR023434">
    <property type="entry name" value="Arginosuc_synth_type_1_subfam"/>
</dbReference>
<dbReference type="InterPro" id="IPR024074">
    <property type="entry name" value="AS_cat/multimer_dom_body"/>
</dbReference>
<dbReference type="InterPro" id="IPR014729">
    <property type="entry name" value="Rossmann-like_a/b/a_fold"/>
</dbReference>
<dbReference type="NCBIfam" id="TIGR00032">
    <property type="entry name" value="argG"/>
    <property type="match status" value="1"/>
</dbReference>
<dbReference type="NCBIfam" id="NF001770">
    <property type="entry name" value="PRK00509.1"/>
    <property type="match status" value="1"/>
</dbReference>
<dbReference type="PANTHER" id="PTHR11587">
    <property type="entry name" value="ARGININOSUCCINATE SYNTHASE"/>
    <property type="match status" value="1"/>
</dbReference>
<dbReference type="PANTHER" id="PTHR11587:SF2">
    <property type="entry name" value="ARGININOSUCCINATE SYNTHASE"/>
    <property type="match status" value="1"/>
</dbReference>
<dbReference type="Pfam" id="PF20979">
    <property type="entry name" value="Arginosuc_syn_C"/>
    <property type="match status" value="1"/>
</dbReference>
<dbReference type="Pfam" id="PF00764">
    <property type="entry name" value="Arginosuc_synth"/>
    <property type="match status" value="1"/>
</dbReference>
<dbReference type="SUPFAM" id="SSF52402">
    <property type="entry name" value="Adenine nucleotide alpha hydrolases-like"/>
    <property type="match status" value="1"/>
</dbReference>
<dbReference type="SUPFAM" id="SSF69864">
    <property type="entry name" value="Argininosuccinate synthetase, C-terminal domain"/>
    <property type="match status" value="1"/>
</dbReference>
<dbReference type="PROSITE" id="PS00564">
    <property type="entry name" value="ARGININOSUCCIN_SYN_1"/>
    <property type="match status" value="1"/>
</dbReference>
<dbReference type="PROSITE" id="PS00565">
    <property type="entry name" value="ARGININOSUCCIN_SYN_2"/>
    <property type="match status" value="1"/>
</dbReference>
<name>ASSY_NITV2</name>
<feature type="chain" id="PRO_0000148593" description="Argininosuccinate synthase">
    <location>
        <begin position="1"/>
        <end position="396"/>
    </location>
</feature>
<feature type="binding site" evidence="1">
    <location>
        <begin position="10"/>
        <end position="18"/>
    </location>
    <ligand>
        <name>ATP</name>
        <dbReference type="ChEBI" id="CHEBI:30616"/>
    </ligand>
</feature>
<feature type="binding site" evidence="1">
    <location>
        <position position="37"/>
    </location>
    <ligand>
        <name>ATP</name>
        <dbReference type="ChEBI" id="CHEBI:30616"/>
    </ligand>
</feature>
<feature type="binding site" evidence="1">
    <location>
        <position position="88"/>
    </location>
    <ligand>
        <name>L-citrulline</name>
        <dbReference type="ChEBI" id="CHEBI:57743"/>
    </ligand>
</feature>
<feature type="binding site" evidence="1">
    <location>
        <position position="93"/>
    </location>
    <ligand>
        <name>L-citrulline</name>
        <dbReference type="ChEBI" id="CHEBI:57743"/>
    </ligand>
</feature>
<feature type="binding site" evidence="1">
    <location>
        <position position="118"/>
    </location>
    <ligand>
        <name>ATP</name>
        <dbReference type="ChEBI" id="CHEBI:30616"/>
    </ligand>
</feature>
<feature type="binding site" evidence="1">
    <location>
        <position position="120"/>
    </location>
    <ligand>
        <name>L-aspartate</name>
        <dbReference type="ChEBI" id="CHEBI:29991"/>
    </ligand>
</feature>
<feature type="binding site" evidence="1">
    <location>
        <position position="124"/>
    </location>
    <ligand>
        <name>L-aspartate</name>
        <dbReference type="ChEBI" id="CHEBI:29991"/>
    </ligand>
</feature>
<feature type="binding site" evidence="1">
    <location>
        <position position="124"/>
    </location>
    <ligand>
        <name>L-citrulline</name>
        <dbReference type="ChEBI" id="CHEBI:57743"/>
    </ligand>
</feature>
<feature type="binding site" evidence="1">
    <location>
        <position position="125"/>
    </location>
    <ligand>
        <name>L-aspartate</name>
        <dbReference type="ChEBI" id="CHEBI:29991"/>
    </ligand>
</feature>
<feature type="binding site" evidence="1">
    <location>
        <position position="128"/>
    </location>
    <ligand>
        <name>L-citrulline</name>
        <dbReference type="ChEBI" id="CHEBI:57743"/>
    </ligand>
</feature>
<feature type="binding site" evidence="1">
    <location>
        <position position="176"/>
    </location>
    <ligand>
        <name>L-citrulline</name>
        <dbReference type="ChEBI" id="CHEBI:57743"/>
    </ligand>
</feature>
<feature type="binding site" evidence="1">
    <location>
        <position position="185"/>
    </location>
    <ligand>
        <name>L-citrulline</name>
        <dbReference type="ChEBI" id="CHEBI:57743"/>
    </ligand>
</feature>
<feature type="binding site" evidence="1">
    <location>
        <position position="261"/>
    </location>
    <ligand>
        <name>L-citrulline</name>
        <dbReference type="ChEBI" id="CHEBI:57743"/>
    </ligand>
</feature>
<feature type="binding site" evidence="1">
    <location>
        <position position="273"/>
    </location>
    <ligand>
        <name>L-citrulline</name>
        <dbReference type="ChEBI" id="CHEBI:57743"/>
    </ligand>
</feature>
<reference key="1">
    <citation type="journal article" date="2004" name="Nat. Biotechnol.">
        <title>The genome sequence of the anaerobic, sulfate-reducing bacterium Desulfovibrio vulgaris Hildenborough.</title>
        <authorList>
            <person name="Heidelberg J.F."/>
            <person name="Seshadri R."/>
            <person name="Haveman S.A."/>
            <person name="Hemme C.L."/>
            <person name="Paulsen I.T."/>
            <person name="Kolonay J.F."/>
            <person name="Eisen J.A."/>
            <person name="Ward N.L."/>
            <person name="Methe B.A."/>
            <person name="Brinkac L.M."/>
            <person name="Daugherty S.C."/>
            <person name="DeBoy R.T."/>
            <person name="Dodson R.J."/>
            <person name="Durkin A.S."/>
            <person name="Madupu R."/>
            <person name="Nelson W.C."/>
            <person name="Sullivan S.A."/>
            <person name="Fouts D.E."/>
            <person name="Haft D.H."/>
            <person name="Selengut J."/>
            <person name="Peterson J.D."/>
            <person name="Davidsen T.M."/>
            <person name="Zafar N."/>
            <person name="Zhou L."/>
            <person name="Radune D."/>
            <person name="Dimitrov G."/>
            <person name="Hance M."/>
            <person name="Tran K."/>
            <person name="Khouri H.M."/>
            <person name="Gill J."/>
            <person name="Utterback T.R."/>
            <person name="Feldblyum T.V."/>
            <person name="Wall J.D."/>
            <person name="Voordouw G."/>
            <person name="Fraser C.M."/>
        </authorList>
    </citation>
    <scope>NUCLEOTIDE SEQUENCE [LARGE SCALE GENOMIC DNA]</scope>
    <source>
        <strain>ATCC 29579 / DSM 644 / CCUG 34227 / NCIMB 8303 / VKM B-1760 / Hildenborough</strain>
    </source>
</reference>
<protein>
    <recommendedName>
        <fullName evidence="1">Argininosuccinate synthase</fullName>
        <ecNumber evidence="1">6.3.4.5</ecNumber>
    </recommendedName>
    <alternativeName>
        <fullName evidence="1">Citrulline--aspartate ligase</fullName>
    </alternativeName>
</protein>
<keyword id="KW-0028">Amino-acid biosynthesis</keyword>
<keyword id="KW-0055">Arginine biosynthesis</keyword>
<keyword id="KW-0067">ATP-binding</keyword>
<keyword id="KW-0963">Cytoplasm</keyword>
<keyword id="KW-0436">Ligase</keyword>
<keyword id="KW-0547">Nucleotide-binding</keyword>
<keyword id="KW-1185">Reference proteome</keyword>
<comment type="catalytic activity">
    <reaction evidence="1">
        <text>L-citrulline + L-aspartate + ATP = 2-(N(omega)-L-arginino)succinate + AMP + diphosphate + H(+)</text>
        <dbReference type="Rhea" id="RHEA:10932"/>
        <dbReference type="ChEBI" id="CHEBI:15378"/>
        <dbReference type="ChEBI" id="CHEBI:29991"/>
        <dbReference type="ChEBI" id="CHEBI:30616"/>
        <dbReference type="ChEBI" id="CHEBI:33019"/>
        <dbReference type="ChEBI" id="CHEBI:57472"/>
        <dbReference type="ChEBI" id="CHEBI:57743"/>
        <dbReference type="ChEBI" id="CHEBI:456215"/>
        <dbReference type="EC" id="6.3.4.5"/>
    </reaction>
</comment>
<comment type="pathway">
    <text evidence="1">Amino-acid biosynthesis; L-arginine biosynthesis; L-arginine from L-ornithine and carbamoyl phosphate: step 2/3.</text>
</comment>
<comment type="subunit">
    <text evidence="1">Homotetramer.</text>
</comment>
<comment type="subcellular location">
    <subcellularLocation>
        <location evidence="1">Cytoplasm</location>
    </subcellularLocation>
</comment>
<comment type="similarity">
    <text evidence="1">Belongs to the argininosuccinate synthase family. Type 1 subfamily.</text>
</comment>
<evidence type="ECO:0000255" key="1">
    <source>
        <dbReference type="HAMAP-Rule" id="MF_00005"/>
    </source>
</evidence>
<proteinExistence type="inferred from homology"/>
<gene>
    <name evidence="1" type="primary">argG</name>
    <name type="ordered locus">DVU_1095</name>
</gene>
<organism>
    <name type="scientific">Nitratidesulfovibrio vulgaris (strain ATCC 29579 / DSM 644 / CCUG 34227 / NCIMB 8303 / VKM B-1760 / Hildenborough)</name>
    <name type="common">Desulfovibrio vulgaris</name>
    <dbReference type="NCBI Taxonomy" id="882"/>
    <lineage>
        <taxon>Bacteria</taxon>
        <taxon>Pseudomonadati</taxon>
        <taxon>Thermodesulfobacteriota</taxon>
        <taxon>Desulfovibrionia</taxon>
        <taxon>Desulfovibrionales</taxon>
        <taxon>Desulfovibrionaceae</taxon>
        <taxon>Nitratidesulfovibrio</taxon>
    </lineage>
</organism>
<accession>P61522</accession>